<feature type="chain" id="PRO_0000382751" description="Serine/threonine-protein kinase-like protein At1g28390">
    <location>
        <begin position="1"/>
        <end position="470"/>
    </location>
</feature>
<feature type="domain" description="Protein kinase" evidence="2">
    <location>
        <begin position="52"/>
        <end position="333"/>
    </location>
</feature>
<feature type="active site" description="Proton acceptor" evidence="2 3">
    <location>
        <position position="186"/>
    </location>
</feature>
<feature type="binding site" evidence="2">
    <location>
        <begin position="58"/>
        <end position="66"/>
    </location>
    <ligand>
        <name>ATP</name>
        <dbReference type="ChEBI" id="CHEBI:30616"/>
    </ligand>
</feature>
<feature type="binding site" evidence="2">
    <location>
        <position position="81"/>
    </location>
    <ligand>
        <name>ATP</name>
        <dbReference type="ChEBI" id="CHEBI:30616"/>
    </ligand>
</feature>
<feature type="modified residue" description="Phosphothreonine" evidence="1">
    <location>
        <position position="221"/>
    </location>
</feature>
<feature type="modified residue" description="Phosphothreonine" evidence="1">
    <location>
        <position position="226"/>
    </location>
</feature>
<feature type="modified residue" description="Phosphotyrosine" evidence="1">
    <location>
        <position position="234"/>
    </location>
</feature>
<name>CCR12_ARATH</name>
<gene>
    <name type="ordered locus">At1g28390</name>
    <name type="ORF">F3M18.17</name>
</gene>
<reference key="1">
    <citation type="journal article" date="2000" name="Nature">
        <title>Sequence and analysis of chromosome 1 of the plant Arabidopsis thaliana.</title>
        <authorList>
            <person name="Theologis A."/>
            <person name="Ecker J.R."/>
            <person name="Palm C.J."/>
            <person name="Federspiel N.A."/>
            <person name="Kaul S."/>
            <person name="White O."/>
            <person name="Alonso J."/>
            <person name="Altafi H."/>
            <person name="Araujo R."/>
            <person name="Bowman C.L."/>
            <person name="Brooks S.Y."/>
            <person name="Buehler E."/>
            <person name="Chan A."/>
            <person name="Chao Q."/>
            <person name="Chen H."/>
            <person name="Cheuk R.F."/>
            <person name="Chin C.W."/>
            <person name="Chung M.K."/>
            <person name="Conn L."/>
            <person name="Conway A.B."/>
            <person name="Conway A.R."/>
            <person name="Creasy T.H."/>
            <person name="Dewar K."/>
            <person name="Dunn P."/>
            <person name="Etgu P."/>
            <person name="Feldblyum T.V."/>
            <person name="Feng J.-D."/>
            <person name="Fong B."/>
            <person name="Fujii C.Y."/>
            <person name="Gill J.E."/>
            <person name="Goldsmith A.D."/>
            <person name="Haas B."/>
            <person name="Hansen N.F."/>
            <person name="Hughes B."/>
            <person name="Huizar L."/>
            <person name="Hunter J.L."/>
            <person name="Jenkins J."/>
            <person name="Johnson-Hopson C."/>
            <person name="Khan S."/>
            <person name="Khaykin E."/>
            <person name="Kim C.J."/>
            <person name="Koo H.L."/>
            <person name="Kremenetskaia I."/>
            <person name="Kurtz D.B."/>
            <person name="Kwan A."/>
            <person name="Lam B."/>
            <person name="Langin-Hooper S."/>
            <person name="Lee A."/>
            <person name="Lee J.M."/>
            <person name="Lenz C.A."/>
            <person name="Li J.H."/>
            <person name="Li Y.-P."/>
            <person name="Lin X."/>
            <person name="Liu S.X."/>
            <person name="Liu Z.A."/>
            <person name="Luros J.S."/>
            <person name="Maiti R."/>
            <person name="Marziali A."/>
            <person name="Militscher J."/>
            <person name="Miranda M."/>
            <person name="Nguyen M."/>
            <person name="Nierman W.C."/>
            <person name="Osborne B.I."/>
            <person name="Pai G."/>
            <person name="Peterson J."/>
            <person name="Pham P.K."/>
            <person name="Rizzo M."/>
            <person name="Rooney T."/>
            <person name="Rowley D."/>
            <person name="Sakano H."/>
            <person name="Salzberg S.L."/>
            <person name="Schwartz J.R."/>
            <person name="Shinn P."/>
            <person name="Southwick A.M."/>
            <person name="Sun H."/>
            <person name="Tallon L.J."/>
            <person name="Tambunga G."/>
            <person name="Toriumi M.J."/>
            <person name="Town C.D."/>
            <person name="Utterback T."/>
            <person name="Van Aken S."/>
            <person name="Vaysberg M."/>
            <person name="Vysotskaia V.S."/>
            <person name="Walker M."/>
            <person name="Wu D."/>
            <person name="Yu G."/>
            <person name="Fraser C.M."/>
            <person name="Venter J.C."/>
            <person name="Davis R.W."/>
        </authorList>
    </citation>
    <scope>NUCLEOTIDE SEQUENCE [LARGE SCALE GENOMIC DNA]</scope>
    <source>
        <strain>cv. Columbia</strain>
    </source>
</reference>
<reference key="2">
    <citation type="journal article" date="2017" name="Plant J.">
        <title>Araport11: a complete reannotation of the Arabidopsis thaliana reference genome.</title>
        <authorList>
            <person name="Cheng C.Y."/>
            <person name="Krishnakumar V."/>
            <person name="Chan A.P."/>
            <person name="Thibaud-Nissen F."/>
            <person name="Schobel S."/>
            <person name="Town C.D."/>
        </authorList>
    </citation>
    <scope>GENOME REANNOTATION</scope>
    <source>
        <strain>cv. Columbia</strain>
    </source>
</reference>
<reference key="3">
    <citation type="journal article" date="2003" name="Science">
        <title>Empirical analysis of transcriptional activity in the Arabidopsis genome.</title>
        <authorList>
            <person name="Yamada K."/>
            <person name="Lim J."/>
            <person name="Dale J.M."/>
            <person name="Chen H."/>
            <person name="Shinn P."/>
            <person name="Palm C.J."/>
            <person name="Southwick A.M."/>
            <person name="Wu H.C."/>
            <person name="Kim C.J."/>
            <person name="Nguyen M."/>
            <person name="Pham P.K."/>
            <person name="Cheuk R.F."/>
            <person name="Karlin-Newmann G."/>
            <person name="Liu S.X."/>
            <person name="Lam B."/>
            <person name="Sakano H."/>
            <person name="Wu T."/>
            <person name="Yu G."/>
            <person name="Miranda M."/>
            <person name="Quach H.L."/>
            <person name="Tripp M."/>
            <person name="Chang C.H."/>
            <person name="Lee J.M."/>
            <person name="Toriumi M.J."/>
            <person name="Chan M.M."/>
            <person name="Tang C.C."/>
            <person name="Onodera C.S."/>
            <person name="Deng J.M."/>
            <person name="Akiyama K."/>
            <person name="Ansari Y."/>
            <person name="Arakawa T."/>
            <person name="Banh J."/>
            <person name="Banno F."/>
            <person name="Bowser L."/>
            <person name="Brooks S.Y."/>
            <person name="Carninci P."/>
            <person name="Chao Q."/>
            <person name="Choy N."/>
            <person name="Enju A."/>
            <person name="Goldsmith A.D."/>
            <person name="Gurjal M."/>
            <person name="Hansen N.F."/>
            <person name="Hayashizaki Y."/>
            <person name="Johnson-Hopson C."/>
            <person name="Hsuan V.W."/>
            <person name="Iida K."/>
            <person name="Karnes M."/>
            <person name="Khan S."/>
            <person name="Koesema E."/>
            <person name="Ishida J."/>
            <person name="Jiang P.X."/>
            <person name="Jones T."/>
            <person name="Kawai J."/>
            <person name="Kamiya A."/>
            <person name="Meyers C."/>
            <person name="Nakajima M."/>
            <person name="Narusaka M."/>
            <person name="Seki M."/>
            <person name="Sakurai T."/>
            <person name="Satou M."/>
            <person name="Tamse R."/>
            <person name="Vaysberg M."/>
            <person name="Wallender E.K."/>
            <person name="Wong C."/>
            <person name="Yamamura Y."/>
            <person name="Yuan S."/>
            <person name="Shinozaki K."/>
            <person name="Davis R.W."/>
            <person name="Theologis A."/>
            <person name="Ecker J.R."/>
        </authorList>
    </citation>
    <scope>NUCLEOTIDE SEQUENCE [LARGE SCALE MRNA]</scope>
    <source>
        <strain>cv. Columbia</strain>
    </source>
</reference>
<reference key="4">
    <citation type="journal article" date="2009" name="Mol. Plant">
        <title>Diverse transcriptional programs associated with environmental stress and hormones in the Arabidopsis receptor-like kinase gene family.</title>
        <authorList>
            <person name="Chae L."/>
            <person name="Sudat S."/>
            <person name="Dudoit S."/>
            <person name="Zhu T."/>
            <person name="Luan S."/>
        </authorList>
    </citation>
    <scope>GENE FAMILY</scope>
</reference>
<protein>
    <recommendedName>
        <fullName>Serine/threonine-protein kinase-like protein At1g28390</fullName>
        <ecNumber>2.7.11.1</ecNumber>
    </recommendedName>
    <alternativeName>
        <fullName>CRINKLY 4-related kinase</fullName>
    </alternativeName>
</protein>
<comment type="catalytic activity">
    <reaction>
        <text>L-seryl-[protein] + ATP = O-phospho-L-seryl-[protein] + ADP + H(+)</text>
        <dbReference type="Rhea" id="RHEA:17989"/>
        <dbReference type="Rhea" id="RHEA-COMP:9863"/>
        <dbReference type="Rhea" id="RHEA-COMP:11604"/>
        <dbReference type="ChEBI" id="CHEBI:15378"/>
        <dbReference type="ChEBI" id="CHEBI:29999"/>
        <dbReference type="ChEBI" id="CHEBI:30616"/>
        <dbReference type="ChEBI" id="CHEBI:83421"/>
        <dbReference type="ChEBI" id="CHEBI:456216"/>
        <dbReference type="EC" id="2.7.11.1"/>
    </reaction>
</comment>
<comment type="catalytic activity">
    <reaction>
        <text>L-threonyl-[protein] + ATP = O-phospho-L-threonyl-[protein] + ADP + H(+)</text>
        <dbReference type="Rhea" id="RHEA:46608"/>
        <dbReference type="Rhea" id="RHEA-COMP:11060"/>
        <dbReference type="Rhea" id="RHEA-COMP:11605"/>
        <dbReference type="ChEBI" id="CHEBI:15378"/>
        <dbReference type="ChEBI" id="CHEBI:30013"/>
        <dbReference type="ChEBI" id="CHEBI:30616"/>
        <dbReference type="ChEBI" id="CHEBI:61977"/>
        <dbReference type="ChEBI" id="CHEBI:456216"/>
        <dbReference type="EC" id="2.7.11.1"/>
    </reaction>
</comment>
<comment type="alternative products">
    <event type="alternative splicing"/>
    <isoform>
        <id>Q9SGN7-1</id>
        <name>1</name>
        <sequence type="displayed"/>
    </isoform>
    <text>A number of isoforms are produced. According to EST sequences.</text>
</comment>
<comment type="similarity">
    <text evidence="2">Belongs to the protein kinase superfamily. Ser/Thr protein kinase family.</text>
</comment>
<organism>
    <name type="scientific">Arabidopsis thaliana</name>
    <name type="common">Mouse-ear cress</name>
    <dbReference type="NCBI Taxonomy" id="3702"/>
    <lineage>
        <taxon>Eukaryota</taxon>
        <taxon>Viridiplantae</taxon>
        <taxon>Streptophyta</taxon>
        <taxon>Embryophyta</taxon>
        <taxon>Tracheophyta</taxon>
        <taxon>Spermatophyta</taxon>
        <taxon>Magnoliopsida</taxon>
        <taxon>eudicotyledons</taxon>
        <taxon>Gunneridae</taxon>
        <taxon>Pentapetalae</taxon>
        <taxon>rosids</taxon>
        <taxon>malvids</taxon>
        <taxon>Brassicales</taxon>
        <taxon>Brassicaceae</taxon>
        <taxon>Camelineae</taxon>
        <taxon>Arabidopsis</taxon>
    </lineage>
</organism>
<proteinExistence type="evidence at transcript level"/>
<evidence type="ECO:0000250" key="1">
    <source>
        <dbReference type="UniProtKB" id="O48814"/>
    </source>
</evidence>
<evidence type="ECO:0000255" key="2">
    <source>
        <dbReference type="PROSITE-ProRule" id="PRU00159"/>
    </source>
</evidence>
<evidence type="ECO:0000255" key="3">
    <source>
        <dbReference type="PROSITE-ProRule" id="PRU10027"/>
    </source>
</evidence>
<dbReference type="EC" id="2.7.11.1"/>
<dbReference type="EMBL" id="AC010155">
    <property type="protein sequence ID" value="AAF16755.1"/>
    <property type="molecule type" value="Genomic_DNA"/>
</dbReference>
<dbReference type="EMBL" id="CP002684">
    <property type="protein sequence ID" value="AEE30966.1"/>
    <property type="molecule type" value="Genomic_DNA"/>
</dbReference>
<dbReference type="EMBL" id="AY075610">
    <property type="protein sequence ID" value="AAL91624.1"/>
    <property type="molecule type" value="mRNA"/>
</dbReference>
<dbReference type="RefSeq" id="NP_174161.1">
    <molecule id="Q9SGN7-1"/>
    <property type="nucleotide sequence ID" value="NM_102606.4"/>
</dbReference>
<dbReference type="SMR" id="Q9SGN7"/>
<dbReference type="BioGRID" id="24971">
    <property type="interactions" value="6"/>
</dbReference>
<dbReference type="FunCoup" id="Q9SGN7">
    <property type="interactions" value="288"/>
</dbReference>
<dbReference type="IntAct" id="Q9SGN7">
    <property type="interactions" value="6"/>
</dbReference>
<dbReference type="STRING" id="3702.Q9SGN7"/>
<dbReference type="PaxDb" id="3702-AT1G28390.2"/>
<dbReference type="EnsemblPlants" id="AT1G28390.1">
    <molecule id="Q9SGN7-1"/>
    <property type="protein sequence ID" value="AT1G28390.1"/>
    <property type="gene ID" value="AT1G28390"/>
</dbReference>
<dbReference type="GeneID" id="839736"/>
<dbReference type="Gramene" id="AT1G28390.1">
    <molecule id="Q9SGN7-1"/>
    <property type="protein sequence ID" value="AT1G28390.1"/>
    <property type="gene ID" value="AT1G28390"/>
</dbReference>
<dbReference type="KEGG" id="ath:AT1G28390"/>
<dbReference type="Araport" id="AT1G28390"/>
<dbReference type="TAIR" id="AT1G28390"/>
<dbReference type="eggNOG" id="KOG1187">
    <property type="taxonomic scope" value="Eukaryota"/>
</dbReference>
<dbReference type="HOGENOM" id="CLU_000288_21_4_1"/>
<dbReference type="InParanoid" id="Q9SGN7"/>
<dbReference type="OMA" id="ICDHRIG"/>
<dbReference type="PhylomeDB" id="Q9SGN7"/>
<dbReference type="PRO" id="PR:Q9SGN7"/>
<dbReference type="Proteomes" id="UP000006548">
    <property type="component" value="Chromosome 1"/>
</dbReference>
<dbReference type="ExpressionAtlas" id="Q9SGN7">
    <property type="expression patterns" value="baseline and differential"/>
</dbReference>
<dbReference type="GO" id="GO:0005524">
    <property type="term" value="F:ATP binding"/>
    <property type="evidence" value="ECO:0007669"/>
    <property type="project" value="UniProtKB-KW"/>
</dbReference>
<dbReference type="GO" id="GO:0106310">
    <property type="term" value="F:protein serine kinase activity"/>
    <property type="evidence" value="ECO:0007669"/>
    <property type="project" value="RHEA"/>
</dbReference>
<dbReference type="GO" id="GO:0004674">
    <property type="term" value="F:protein serine/threonine kinase activity"/>
    <property type="evidence" value="ECO:0007669"/>
    <property type="project" value="UniProtKB-KW"/>
</dbReference>
<dbReference type="FunFam" id="1.10.510.10:FF:001983">
    <property type="entry name" value="Serine/threonine-protein kinase-like protein At1g28390"/>
    <property type="match status" value="1"/>
</dbReference>
<dbReference type="FunFam" id="3.30.200.20:FF:000922">
    <property type="entry name" value="Serine/threonine-protein kinase-like protein At1g28390"/>
    <property type="match status" value="1"/>
</dbReference>
<dbReference type="Gene3D" id="3.30.200.20">
    <property type="entry name" value="Phosphorylase Kinase, domain 1"/>
    <property type="match status" value="1"/>
</dbReference>
<dbReference type="Gene3D" id="1.10.510.10">
    <property type="entry name" value="Transferase(Phosphotransferase) domain 1"/>
    <property type="match status" value="1"/>
</dbReference>
<dbReference type="InterPro" id="IPR011009">
    <property type="entry name" value="Kinase-like_dom_sf"/>
</dbReference>
<dbReference type="InterPro" id="IPR000719">
    <property type="entry name" value="Prot_kinase_dom"/>
</dbReference>
<dbReference type="InterPro" id="IPR017441">
    <property type="entry name" value="Protein_kinase_ATP_BS"/>
</dbReference>
<dbReference type="InterPro" id="IPR008271">
    <property type="entry name" value="Ser/Thr_kinase_AS"/>
</dbReference>
<dbReference type="PANTHER" id="PTHR46146:SF23">
    <property type="entry name" value="PROTEIN KINASE DOMAIN-CONTAINING PROTEIN"/>
    <property type="match status" value="1"/>
</dbReference>
<dbReference type="PANTHER" id="PTHR46146">
    <property type="entry name" value="SERINE/THREONINE-PROTEIN KINASE-LIKE PROTEIN CCR4"/>
    <property type="match status" value="1"/>
</dbReference>
<dbReference type="Pfam" id="PF00069">
    <property type="entry name" value="Pkinase"/>
    <property type="match status" value="1"/>
</dbReference>
<dbReference type="SMART" id="SM00220">
    <property type="entry name" value="S_TKc"/>
    <property type="match status" value="1"/>
</dbReference>
<dbReference type="SUPFAM" id="SSF56112">
    <property type="entry name" value="Protein kinase-like (PK-like)"/>
    <property type="match status" value="1"/>
</dbReference>
<dbReference type="PROSITE" id="PS00107">
    <property type="entry name" value="PROTEIN_KINASE_ATP"/>
    <property type="match status" value="1"/>
</dbReference>
<dbReference type="PROSITE" id="PS50011">
    <property type="entry name" value="PROTEIN_KINASE_DOM"/>
    <property type="match status" value="1"/>
</dbReference>
<dbReference type="PROSITE" id="PS00108">
    <property type="entry name" value="PROTEIN_KINASE_ST"/>
    <property type="match status" value="1"/>
</dbReference>
<sequence length="470" mass="53076">MGYLSCNGESAVAICDTYNWNPRRRSKVPEKRHPPKLRVFNYDELAVATNGFSANNFLGKGSHGRVYKAVLDDGKLLAAVKRTTITTTVGNNNNNVSQVDNEIEILSRVRHRWMVNLIGYCVDHRRKTKLLVVEYMPNGTLHDQLHSRSSLDSRLSSWNRRIKHALQIAIAVHALHTAETQVIHRDIKSCNVLIDGDGNARLADFGLALIGNVDDERLKYTPPAGTLGYLDPSYLAPADLTAKSDVFSFGILLLEIISGREAIDLNYSPSCIVDWAVPLIKRGDYDAICDLKIKNRPYYAVIRKLAVMAARCVRSTAKKRPDMLEVVECLKTVRQLSPAWNKLRRRSEERSENVLAVEEEKEEIHVRIVRGGSRKNRKVSNVTTSVDDVYERLVPEETLPFRRRNFVLRSRSVGAKVGPDPYDGFGDETVVTMRLLIEKERPVTTAAMRLSKSRSVGIVRSHKTASRKRY</sequence>
<keyword id="KW-0025">Alternative splicing</keyword>
<keyword id="KW-0067">ATP-binding</keyword>
<keyword id="KW-0418">Kinase</keyword>
<keyword id="KW-0547">Nucleotide-binding</keyword>
<keyword id="KW-0597">Phosphoprotein</keyword>
<keyword id="KW-0675">Receptor</keyword>
<keyword id="KW-1185">Reference proteome</keyword>
<keyword id="KW-0723">Serine/threonine-protein kinase</keyword>
<keyword id="KW-0808">Transferase</keyword>
<accession>Q9SGN7</accession>